<comment type="catalytic activity">
    <reaction evidence="1">
        <text>a quinone + NADH + H(+) = a quinol + NAD(+)</text>
        <dbReference type="Rhea" id="RHEA:46160"/>
        <dbReference type="ChEBI" id="CHEBI:15378"/>
        <dbReference type="ChEBI" id="CHEBI:24646"/>
        <dbReference type="ChEBI" id="CHEBI:57540"/>
        <dbReference type="ChEBI" id="CHEBI:57945"/>
        <dbReference type="ChEBI" id="CHEBI:132124"/>
        <dbReference type="EC" id="1.6.5.2"/>
    </reaction>
</comment>
<comment type="catalytic activity">
    <reaction evidence="1">
        <text>a quinone + NADPH + H(+) = a quinol + NADP(+)</text>
        <dbReference type="Rhea" id="RHEA:46164"/>
        <dbReference type="ChEBI" id="CHEBI:15378"/>
        <dbReference type="ChEBI" id="CHEBI:24646"/>
        <dbReference type="ChEBI" id="CHEBI:57783"/>
        <dbReference type="ChEBI" id="CHEBI:58349"/>
        <dbReference type="ChEBI" id="CHEBI:132124"/>
        <dbReference type="EC" id="1.6.5.2"/>
    </reaction>
</comment>
<comment type="cofactor">
    <cofactor evidence="1">
        <name>FMN</name>
        <dbReference type="ChEBI" id="CHEBI:58210"/>
    </cofactor>
    <text evidence="1">Binds 1 FMN per monomer.</text>
</comment>
<comment type="similarity">
    <text evidence="1">Belongs to the WrbA family.</text>
</comment>
<accession>B2JML0</accession>
<reference key="1">
    <citation type="journal article" date="2014" name="Stand. Genomic Sci.">
        <title>Complete genome sequence of Burkholderia phymatum STM815(T), a broad host range and efficient nitrogen-fixing symbiont of Mimosa species.</title>
        <authorList>
            <person name="Moulin L."/>
            <person name="Klonowska A."/>
            <person name="Caroline B."/>
            <person name="Booth K."/>
            <person name="Vriezen J.A."/>
            <person name="Melkonian R."/>
            <person name="James E.K."/>
            <person name="Young J.P."/>
            <person name="Bena G."/>
            <person name="Hauser L."/>
            <person name="Land M."/>
            <person name="Kyrpides N."/>
            <person name="Bruce D."/>
            <person name="Chain P."/>
            <person name="Copeland A."/>
            <person name="Pitluck S."/>
            <person name="Woyke T."/>
            <person name="Lizotte-Waniewski M."/>
            <person name="Bristow J."/>
            <person name="Riley M."/>
        </authorList>
    </citation>
    <scope>NUCLEOTIDE SEQUENCE [LARGE SCALE GENOMIC DNA]</scope>
    <source>
        <strain>DSM 17167 / CIP 108236 / LMG 21445 / STM815</strain>
    </source>
</reference>
<keyword id="KW-0285">Flavoprotein</keyword>
<keyword id="KW-0288">FMN</keyword>
<keyword id="KW-0520">NAD</keyword>
<keyword id="KW-0521">NADP</keyword>
<keyword id="KW-0547">Nucleotide-binding</keyword>
<keyword id="KW-0560">Oxidoreductase</keyword>
<keyword id="KW-1185">Reference proteome</keyword>
<evidence type="ECO:0000255" key="1">
    <source>
        <dbReference type="HAMAP-Rule" id="MF_01017"/>
    </source>
</evidence>
<sequence length="199" mass="20943">MARVLVLYYSSYGHIEKMAEAIAEGARGAGAQVDIKRVPETVPEEIAKKANFKLDQQAPIATVADLEQYDAIVVGTGTRYGRISSQMAAFLDQTGGLWMRGALNGKVGAAFASTATQHGGQETTLFSIITNLMHLGMIIVGLPYSHQGMMNMTEIVGGAPYGATTIAAGDGSRQPSAIDLEGARHQGELVAKTAAKLFG</sequence>
<name>NQOR_PARP8</name>
<proteinExistence type="inferred from homology"/>
<organism>
    <name type="scientific">Paraburkholderia phymatum (strain DSM 17167 / CIP 108236 / LMG 21445 / STM815)</name>
    <name type="common">Burkholderia phymatum</name>
    <dbReference type="NCBI Taxonomy" id="391038"/>
    <lineage>
        <taxon>Bacteria</taxon>
        <taxon>Pseudomonadati</taxon>
        <taxon>Pseudomonadota</taxon>
        <taxon>Betaproteobacteria</taxon>
        <taxon>Burkholderiales</taxon>
        <taxon>Burkholderiaceae</taxon>
        <taxon>Paraburkholderia</taxon>
    </lineage>
</organism>
<protein>
    <recommendedName>
        <fullName evidence="1">NAD(P)H dehydrogenase (quinone)</fullName>
        <ecNumber evidence="1">1.6.5.2</ecNumber>
    </recommendedName>
    <alternativeName>
        <fullName>Flavoprotein WrbA</fullName>
    </alternativeName>
    <alternativeName>
        <fullName evidence="1">NAD(P)H:quinone oxidoreductase</fullName>
        <shortName evidence="1">NQO</shortName>
    </alternativeName>
</protein>
<dbReference type="EC" id="1.6.5.2" evidence="1"/>
<dbReference type="EMBL" id="CP001044">
    <property type="protein sequence ID" value="ACC72804.1"/>
    <property type="molecule type" value="Genomic_DNA"/>
</dbReference>
<dbReference type="RefSeq" id="WP_012402977.1">
    <property type="nucleotide sequence ID" value="NC_010623.1"/>
</dbReference>
<dbReference type="SMR" id="B2JML0"/>
<dbReference type="STRING" id="391038.Bphy_3669"/>
<dbReference type="CAZy" id="AA6">
    <property type="family name" value="Auxiliary Activities 6"/>
</dbReference>
<dbReference type="KEGG" id="bph:Bphy_3669"/>
<dbReference type="eggNOG" id="COG0655">
    <property type="taxonomic scope" value="Bacteria"/>
</dbReference>
<dbReference type="HOGENOM" id="CLU_051402_0_2_4"/>
<dbReference type="OrthoDB" id="9801479at2"/>
<dbReference type="Proteomes" id="UP000001192">
    <property type="component" value="Chromosome 2"/>
</dbReference>
<dbReference type="GO" id="GO:0016020">
    <property type="term" value="C:membrane"/>
    <property type="evidence" value="ECO:0007669"/>
    <property type="project" value="TreeGrafter"/>
</dbReference>
<dbReference type="GO" id="GO:0050660">
    <property type="term" value="F:flavin adenine dinucleotide binding"/>
    <property type="evidence" value="ECO:0007669"/>
    <property type="project" value="UniProtKB-UniRule"/>
</dbReference>
<dbReference type="GO" id="GO:0010181">
    <property type="term" value="F:FMN binding"/>
    <property type="evidence" value="ECO:0007669"/>
    <property type="project" value="InterPro"/>
</dbReference>
<dbReference type="GO" id="GO:0051287">
    <property type="term" value="F:NAD binding"/>
    <property type="evidence" value="ECO:0007669"/>
    <property type="project" value="UniProtKB-UniRule"/>
</dbReference>
<dbReference type="GO" id="GO:0050136">
    <property type="term" value="F:NADH:ubiquinone reductase (non-electrogenic) activity"/>
    <property type="evidence" value="ECO:0007669"/>
    <property type="project" value="RHEA"/>
</dbReference>
<dbReference type="GO" id="GO:0050661">
    <property type="term" value="F:NADP binding"/>
    <property type="evidence" value="ECO:0007669"/>
    <property type="project" value="UniProtKB-UniRule"/>
</dbReference>
<dbReference type="GO" id="GO:0008753">
    <property type="term" value="F:NADPH dehydrogenase (quinone) activity"/>
    <property type="evidence" value="ECO:0007669"/>
    <property type="project" value="RHEA"/>
</dbReference>
<dbReference type="FunFam" id="3.40.50.360:FF:000001">
    <property type="entry name" value="NAD(P)H dehydrogenase (Quinone) FQR1-like"/>
    <property type="match status" value="1"/>
</dbReference>
<dbReference type="Gene3D" id="3.40.50.360">
    <property type="match status" value="1"/>
</dbReference>
<dbReference type="HAMAP" id="MF_01017">
    <property type="entry name" value="NQOR"/>
    <property type="match status" value="1"/>
</dbReference>
<dbReference type="InterPro" id="IPR008254">
    <property type="entry name" value="Flavodoxin/NO_synth"/>
</dbReference>
<dbReference type="InterPro" id="IPR029039">
    <property type="entry name" value="Flavoprotein-like_sf"/>
</dbReference>
<dbReference type="InterPro" id="IPR010089">
    <property type="entry name" value="Flavoprotein_WrbA-like"/>
</dbReference>
<dbReference type="InterPro" id="IPR005025">
    <property type="entry name" value="FMN_Rdtase-like_dom"/>
</dbReference>
<dbReference type="InterPro" id="IPR037513">
    <property type="entry name" value="NQO"/>
</dbReference>
<dbReference type="NCBIfam" id="TIGR01755">
    <property type="entry name" value="flav_wrbA"/>
    <property type="match status" value="1"/>
</dbReference>
<dbReference type="NCBIfam" id="NF002999">
    <property type="entry name" value="PRK03767.1"/>
    <property type="match status" value="1"/>
</dbReference>
<dbReference type="PANTHER" id="PTHR30546">
    <property type="entry name" value="FLAVODOXIN-RELATED PROTEIN WRBA-RELATED"/>
    <property type="match status" value="1"/>
</dbReference>
<dbReference type="PANTHER" id="PTHR30546:SF23">
    <property type="entry name" value="FLAVOPROTEIN-LIKE PROTEIN YCP4-RELATED"/>
    <property type="match status" value="1"/>
</dbReference>
<dbReference type="Pfam" id="PF03358">
    <property type="entry name" value="FMN_red"/>
    <property type="match status" value="1"/>
</dbReference>
<dbReference type="SUPFAM" id="SSF52218">
    <property type="entry name" value="Flavoproteins"/>
    <property type="match status" value="1"/>
</dbReference>
<dbReference type="PROSITE" id="PS50902">
    <property type="entry name" value="FLAVODOXIN_LIKE"/>
    <property type="match status" value="1"/>
</dbReference>
<gene>
    <name type="ordered locus">Bphy_3669</name>
</gene>
<feature type="chain" id="PRO_1000200620" description="NAD(P)H dehydrogenase (quinone)">
    <location>
        <begin position="1"/>
        <end position="199"/>
    </location>
</feature>
<feature type="domain" description="Flavodoxin-like" evidence="1">
    <location>
        <begin position="4"/>
        <end position="190"/>
    </location>
</feature>
<feature type="binding site" evidence="1">
    <location>
        <begin position="10"/>
        <end position="15"/>
    </location>
    <ligand>
        <name>FMN</name>
        <dbReference type="ChEBI" id="CHEBI:58210"/>
    </ligand>
</feature>
<feature type="binding site" evidence="1">
    <location>
        <position position="12"/>
    </location>
    <ligand>
        <name>NAD(+)</name>
        <dbReference type="ChEBI" id="CHEBI:57540"/>
    </ligand>
</feature>
<feature type="binding site" evidence="1">
    <location>
        <begin position="78"/>
        <end position="80"/>
    </location>
    <ligand>
        <name>FMN</name>
        <dbReference type="ChEBI" id="CHEBI:58210"/>
    </ligand>
</feature>
<feature type="binding site" evidence="1">
    <location>
        <position position="98"/>
    </location>
    <ligand>
        <name>substrate</name>
    </ligand>
</feature>
<feature type="binding site" evidence="1">
    <location>
        <begin position="113"/>
        <end position="119"/>
    </location>
    <ligand>
        <name>FMN</name>
        <dbReference type="ChEBI" id="CHEBI:58210"/>
    </ligand>
</feature>
<feature type="binding site" evidence="1">
    <location>
        <position position="134"/>
    </location>
    <ligand>
        <name>FMN</name>
        <dbReference type="ChEBI" id="CHEBI:58210"/>
    </ligand>
</feature>